<proteinExistence type="evidence at protein level"/>
<organism>
    <name type="scientific">Mus musculus</name>
    <name type="common">Mouse</name>
    <dbReference type="NCBI Taxonomy" id="10090"/>
    <lineage>
        <taxon>Eukaryota</taxon>
        <taxon>Metazoa</taxon>
        <taxon>Chordata</taxon>
        <taxon>Craniata</taxon>
        <taxon>Vertebrata</taxon>
        <taxon>Euteleostomi</taxon>
        <taxon>Mammalia</taxon>
        <taxon>Eutheria</taxon>
        <taxon>Euarchontoglires</taxon>
        <taxon>Glires</taxon>
        <taxon>Rodentia</taxon>
        <taxon>Myomorpha</taxon>
        <taxon>Muroidea</taxon>
        <taxon>Muridae</taxon>
        <taxon>Murinae</taxon>
        <taxon>Mus</taxon>
        <taxon>Mus</taxon>
    </lineage>
</organism>
<name>ANKF1_MOUSE</name>
<dbReference type="EMBL" id="AL645903">
    <property type="status" value="NOT_ANNOTATED_CDS"/>
    <property type="molecule type" value="Genomic_DNA"/>
</dbReference>
<dbReference type="EMBL" id="AL672280">
    <property type="status" value="NOT_ANNOTATED_CDS"/>
    <property type="molecule type" value="Genomic_DNA"/>
</dbReference>
<dbReference type="EMBL" id="AL662930">
    <property type="status" value="NOT_ANNOTATED_CDS"/>
    <property type="molecule type" value="Genomic_DNA"/>
</dbReference>
<dbReference type="EMBL" id="AEKQ02046863">
    <property type="status" value="NOT_ANNOTATED_CDS"/>
    <property type="molecule type" value="Genomic_DNA"/>
</dbReference>
<dbReference type="EMBL" id="AL772375">
    <property type="status" value="NOT_ANNOTATED_CDS"/>
    <property type="molecule type" value="Genomic_DNA"/>
</dbReference>
<dbReference type="EMBL" id="AL672175">
    <property type="status" value="NOT_ANNOTATED_CDS"/>
    <property type="molecule type" value="Genomic_DNA"/>
</dbReference>
<dbReference type="FunCoup" id="A0A571BF63">
    <property type="interactions" value="32"/>
</dbReference>
<dbReference type="GlyGen" id="A0A571BF63">
    <property type="glycosylation" value="1 site"/>
</dbReference>
<dbReference type="iPTMnet" id="A0A571BF63"/>
<dbReference type="PhosphoSitePlus" id="A0A571BF63"/>
<dbReference type="Antibodypedia" id="18285">
    <property type="antibodies" value="20 antibodies from 8 providers"/>
</dbReference>
<dbReference type="Ensembl" id="ENSMUST00000238273.3">
    <property type="protein sequence ID" value="ENSMUSP00000158789.2"/>
    <property type="gene ID" value="ENSMUSG00000047773.16"/>
</dbReference>
<dbReference type="AGR" id="MGI:2686021"/>
<dbReference type="MGI" id="MGI:2686021">
    <property type="gene designation" value="Ankfn1"/>
</dbReference>
<dbReference type="VEuPathDB" id="HostDB:ENSMUSG00000047773"/>
<dbReference type="GeneTree" id="ENSGT00940000159856"/>
<dbReference type="InParanoid" id="A0A571BF63"/>
<dbReference type="OMA" id="SINWNCC"/>
<dbReference type="OrthoDB" id="2428204at2759"/>
<dbReference type="PRO" id="PR:A0A571BF63"/>
<dbReference type="Proteomes" id="UP000000589">
    <property type="component" value="Chromosome 11"/>
</dbReference>
<dbReference type="Bgee" id="ENSMUSG00000047773">
    <property type="expression patterns" value="Expressed in mesodermal cell in embryo and 23 other cell types or tissues"/>
</dbReference>
<dbReference type="ExpressionAtlas" id="A0A571BF63">
    <property type="expression patterns" value="baseline and differential"/>
</dbReference>
<dbReference type="GO" id="GO:0001662">
    <property type="term" value="P:behavioral fear response"/>
    <property type="evidence" value="ECO:0000315"/>
    <property type="project" value="MGI"/>
</dbReference>
<dbReference type="GO" id="GO:0050957">
    <property type="term" value="P:equilibrioception"/>
    <property type="evidence" value="ECO:0000315"/>
    <property type="project" value="MGI"/>
</dbReference>
<dbReference type="GO" id="GO:0045475">
    <property type="term" value="P:locomotor rhythm"/>
    <property type="evidence" value="ECO:0000315"/>
    <property type="project" value="MGI"/>
</dbReference>
<dbReference type="CDD" id="cd00063">
    <property type="entry name" value="FN3"/>
    <property type="match status" value="1"/>
</dbReference>
<dbReference type="FunFam" id="1.25.40.20:FF:000296">
    <property type="entry name" value="Ankyrin repeat and fibronectin type III domain containing 1"/>
    <property type="match status" value="1"/>
</dbReference>
<dbReference type="FunFam" id="2.60.40.10:FF:000905">
    <property type="entry name" value="Ankyrin repeat and fibronectin type III domain containing 1"/>
    <property type="match status" value="1"/>
</dbReference>
<dbReference type="Gene3D" id="1.25.40.20">
    <property type="entry name" value="Ankyrin repeat-containing domain"/>
    <property type="match status" value="1"/>
</dbReference>
<dbReference type="Gene3D" id="2.60.40.10">
    <property type="entry name" value="Immunoglobulins"/>
    <property type="match status" value="1"/>
</dbReference>
<dbReference type="InterPro" id="IPR039269">
    <property type="entry name" value="ANKFN1"/>
</dbReference>
<dbReference type="InterPro" id="IPR002110">
    <property type="entry name" value="Ankyrin_rpt"/>
</dbReference>
<dbReference type="InterPro" id="IPR036770">
    <property type="entry name" value="Ankyrin_rpt-contain_sf"/>
</dbReference>
<dbReference type="InterPro" id="IPR003961">
    <property type="entry name" value="FN3_dom"/>
</dbReference>
<dbReference type="InterPro" id="IPR036116">
    <property type="entry name" value="FN3_sf"/>
</dbReference>
<dbReference type="InterPro" id="IPR013783">
    <property type="entry name" value="Ig-like_fold"/>
</dbReference>
<dbReference type="PANTHER" id="PTHR21437:SF3">
    <property type="entry name" value="ANKYRIN REPEAT AND FIBRONECTIN TYPE-III DOMAIN-CONTAINING PROTEIN 1"/>
    <property type="match status" value="1"/>
</dbReference>
<dbReference type="PANTHER" id="PTHR21437">
    <property type="entry name" value="WIDE AWAKE"/>
    <property type="match status" value="1"/>
</dbReference>
<dbReference type="Pfam" id="PF12796">
    <property type="entry name" value="Ank_2"/>
    <property type="match status" value="1"/>
</dbReference>
<dbReference type="Pfam" id="PF00041">
    <property type="entry name" value="fn3"/>
    <property type="match status" value="1"/>
</dbReference>
<dbReference type="SMART" id="SM00248">
    <property type="entry name" value="ANK"/>
    <property type="match status" value="2"/>
</dbReference>
<dbReference type="SMART" id="SM00060">
    <property type="entry name" value="FN3"/>
    <property type="match status" value="1"/>
</dbReference>
<dbReference type="SUPFAM" id="SSF48403">
    <property type="entry name" value="Ankyrin repeat"/>
    <property type="match status" value="1"/>
</dbReference>
<dbReference type="SUPFAM" id="SSF49265">
    <property type="entry name" value="Fibronectin type III"/>
    <property type="match status" value="1"/>
</dbReference>
<dbReference type="PROSITE" id="PS50297">
    <property type="entry name" value="ANK_REP_REGION"/>
    <property type="match status" value="1"/>
</dbReference>
<dbReference type="PROSITE" id="PS50088">
    <property type="entry name" value="ANK_REPEAT"/>
    <property type="match status" value="1"/>
</dbReference>
<dbReference type="PROSITE" id="PS50853">
    <property type="entry name" value="FN3"/>
    <property type="match status" value="1"/>
</dbReference>
<feature type="chain" id="PRO_0000457806" description="Ankyrin-repeat and fibronectin type III domain-containing 1">
    <location>
        <begin position="1"/>
        <end position="1286"/>
    </location>
</feature>
<feature type="repeat" description="ANK 1" evidence="1">
    <location>
        <begin position="274"/>
        <end position="303"/>
    </location>
</feature>
<feature type="repeat" description="ANK 2" evidence="1">
    <location>
        <begin position="311"/>
        <end position="340"/>
    </location>
</feature>
<feature type="domain" description="Fibronectin type-III" evidence="2">
    <location>
        <begin position="411"/>
        <end position="507"/>
    </location>
</feature>
<feature type="region of interest" description="Highly conserved peptide sequence" evidence="4">
    <location>
        <begin position="748"/>
        <end position="755"/>
    </location>
</feature>
<feature type="region of interest" description="Disordered" evidence="3">
    <location>
        <begin position="999"/>
        <end position="1032"/>
    </location>
</feature>
<feature type="region of interest" description="Disordered" evidence="3">
    <location>
        <begin position="1086"/>
        <end position="1106"/>
    </location>
</feature>
<feature type="region of interest" description="Disordered" evidence="3">
    <location>
        <begin position="1187"/>
        <end position="1207"/>
    </location>
</feature>
<feature type="region of interest" description="Disordered" evidence="3">
    <location>
        <begin position="1242"/>
        <end position="1286"/>
    </location>
</feature>
<feature type="compositionally biased region" description="Polar residues" evidence="3">
    <location>
        <begin position="999"/>
        <end position="1011"/>
    </location>
</feature>
<feature type="compositionally biased region" description="Low complexity" evidence="3">
    <location>
        <begin position="1260"/>
        <end position="1277"/>
    </location>
</feature>
<feature type="mutagenesis site" description="Fails to complement ENU-induced null mutation." evidence="4">
    <original>G</original>
    <variation>A</variation>
    <location>
        <position position="748"/>
    </location>
</feature>
<sequence length="1286" mass="145202">MLCLEKLVAVLLKTQRTSDAYKKGPWKSQRYTVSGSRVAYKRLNCDDIWARKKSRRIPMVPGGTYSPMPESQPLEDSPKALPVLGEQSNSDNDINEPVFIWGISDKAAQRKSISAGEGSFRLQQEKQQPLVHRPGRGKGRLRLPHRLPFKDRHFTCSKIIGRRFACFAQRLSYRRKQSQCDLLNESTGHLPATCSSAASKSLSWNYCSKMTQQMQNLHLSQSKKHSAPSSPNAAKRLYRNLSEKLKGSHSSFDEAYFRTRTDRLSLRKTSVNFQGNEAMFEAVEQQDLDAVQLLLYQYTPEELDLNTPNSEGLTPLDIAIMTNNVPIARILLRTGARESPHFVSLESRAMHLNTLVQEAQDRVSELSAQVENEGFTLDNTEKEKQLKAWEWRYRLYRRMKTGFEHARAPEVPANACLMVSSSTSLTVSFQEPLSVNAAVVTRYKVEWSMSKDFSPLAGEIIMDNLQTLRCTITGLTTGQQYFVQVSAYNMKGWGPAQTTTPVCASPSNWKDYDDREPRHKGQSEVLESLLQQVRALHQHYSCRESSKLQTTGRKQSVSRSLKHLFHSSNKFVKTLKRGLYIATIFYYKDNMLVTNEDQIPIVEIDDSHTSSITQDFLWFMKLSCMWEDIRWLRQSVPISMSSSTVLQTRQKMLAATAQLQNLLGTHNLGRLYYEPIKDRHGNILIVTIREVEMLYSFFNGKWMQISKLQSQRKSLSTPEEPTALDILLITIQDILSYHKRSHQRLSPGLYLGYLKLCSSVDQIKVLVTQKLPNILCHVKIRENHNISKEEWEWIQKLSGSESMESVDHNADCPMQLFFYELQMAVAALLKQINIPRHQARNFRLYTQEVLEIGHNVSFLLLLPASDDVCTAPGQNNPYTPHSGFLNLPLQMFELVHFCSYREKFISLYCRLSAVVELDSLNTQQSLREAISDSEVAAAKQRHQQVLDFIQQIDEVWREMRWIMDALQYARYKQPVSGLPITKLIDSSSEQNLKKISSTSSHIDCLPSTSPSPEMHRRKAVSESQPCSDEEGCSEVFLPTDSDYDSSDALSPRDLDLVYLSSHDIAQQALSGLSGSAPDVLQVHDMKASMGPGQDPQGPGQGPDTDHSCVEFLHSLTLTGLAPKNHAKMVAGTRPPLGFLGKRKPGKHQHYGGFSRHHRWLRMHSETQSLSLSEGVYTQHLSQACGLAEDPGEAEGPGPVVDGPRGLPLAHAASLPEERRSCLQDPRRPLQRVYVEPYSDTLAGQDPKLWTSLSPTPAGRSSLPSSTSSEMSPDPTSPVSEILSSML</sequence>
<reference key="1">
    <citation type="journal article" date="2009" name="PLoS Biol.">
        <title>Lineage-specific biology revealed by a finished genome assembly of the mouse.</title>
        <authorList>
            <person name="Church D.M."/>
            <person name="Goodstadt L."/>
            <person name="Hillier L.W."/>
            <person name="Zody M.C."/>
            <person name="Goldstein S."/>
            <person name="She X."/>
            <person name="Bult C.J."/>
            <person name="Agarwala R."/>
            <person name="Cherry J.L."/>
            <person name="DiCuccio M."/>
            <person name="Hlavina W."/>
            <person name="Kapustin Y."/>
            <person name="Meric P."/>
            <person name="Maglott D."/>
            <person name="Birtle Z."/>
            <person name="Marques A.C."/>
            <person name="Graves T."/>
            <person name="Zhou S."/>
            <person name="Teague B."/>
            <person name="Potamousis K."/>
            <person name="Churas C."/>
            <person name="Place M."/>
            <person name="Herschleb J."/>
            <person name="Runnheim R."/>
            <person name="Forrest D."/>
            <person name="Amos-Landgraf J."/>
            <person name="Schwartz D.C."/>
            <person name="Cheng Z."/>
            <person name="Lindblad-Toh K."/>
            <person name="Eichler E.E."/>
            <person name="Ponting C.P."/>
        </authorList>
    </citation>
    <scope>NUCLEOTIDE SEQUENCE [LARGE SCALE GENOMIC DNA]</scope>
    <source>
        <strain>C57BL/6J</strain>
    </source>
</reference>
<reference key="2">
    <citation type="journal article" date="2015" name="PLoS Genet.">
        <title>Nmf9 Encodes a Highly Conserved Protein Important to Neurological Function in Mice and Flies.</title>
        <authorList>
            <person name="Zhang S."/>
            <person name="Ross K.D."/>
            <person name="Seidner G.A."/>
            <person name="Gorman M.R."/>
            <person name="Poon T.H."/>
            <person name="Wang X."/>
            <person name="Keithley E.M."/>
            <person name="Lee P.N."/>
            <person name="Martindale M.Q."/>
            <person name="Joiner W.J."/>
            <person name="Hamilton B.A."/>
        </authorList>
    </citation>
    <scope>TISSUE SPECIFICITY</scope>
    <scope>FUNCTION</scope>
    <scope>DISRUPTION PHENOTYPE</scope>
    <scope>MUTAGENESIS OF GLY-748</scope>
</reference>
<reference key="3">
    <citation type="journal article" date="2021" name="J. Comp. Neurol.">
        <title>Characterization of mWake expression in the murine brain.</title>
        <authorList>
            <person name="Bell B.J."/>
            <person name="Wang A.A."/>
            <person name="Kim D.W."/>
            <person name="Xiong J."/>
            <person name="Blackshaw S."/>
            <person name="Wu M.N."/>
        </authorList>
    </citation>
    <scope>TISSUE SPECIFICITY</scope>
</reference>
<evidence type="ECO:0000255" key="1"/>
<evidence type="ECO:0000255" key="2">
    <source>
        <dbReference type="PROSITE-ProRule" id="PRU00316"/>
    </source>
</evidence>
<evidence type="ECO:0000256" key="3">
    <source>
        <dbReference type="SAM" id="MobiDB-lite"/>
    </source>
</evidence>
<evidence type="ECO:0000269" key="4">
    <source>
    </source>
</evidence>
<evidence type="ECO:0000269" key="5">
    <source>
    </source>
</evidence>
<evidence type="ECO:0000303" key="6">
    <source>
    </source>
</evidence>
<evidence type="ECO:0000303" key="7">
    <source>
    </source>
</evidence>
<evidence type="ECO:0000312" key="8">
    <source>
        <dbReference type="MGI" id="MGI:2686021"/>
    </source>
</evidence>
<comment type="function">
    <text evidence="4">May play a role in neuronal function.</text>
</comment>
<comment type="tissue specificity">
    <text evidence="4 5">Expressed in both the suprachiasmatic nucleus and dorsal medial hypothalamus.</text>
</comment>
<comment type="disruption phenotype">
    <text evidence="4">ENU-induced null mutation in mice produce several neurological abnormalities, including deficits in vestibular function, fear learning and circadian behavior.</text>
</comment>
<protein>
    <recommendedName>
        <fullName>Ankyrin-repeat and fibronectin type III domain-containing 1</fullName>
    </recommendedName>
</protein>
<accession>A0A571BF63</accession>
<gene>
    <name evidence="8" type="primary">Ankfn1</name>
    <name evidence="7" type="synonym">mWake</name>
    <name evidence="6" type="synonym">Nmf9</name>
</gene>
<keyword id="KW-0040">ANK repeat</keyword>
<keyword id="KW-1185">Reference proteome</keyword>
<keyword id="KW-0677">Repeat</keyword>